<dbReference type="EMBL" id="CP000576">
    <property type="protein sequence ID" value="ABO17086.1"/>
    <property type="molecule type" value="Genomic_DNA"/>
</dbReference>
<dbReference type="SMR" id="A3PBG1"/>
<dbReference type="STRING" id="167546.P9301_04631"/>
<dbReference type="KEGG" id="pmg:P9301_04631"/>
<dbReference type="eggNOG" id="COG2038">
    <property type="taxonomic scope" value="Bacteria"/>
</dbReference>
<dbReference type="HOGENOM" id="CLU_053134_1_0_3"/>
<dbReference type="OrthoDB" id="418257at2"/>
<dbReference type="Proteomes" id="UP000001430">
    <property type="component" value="Chromosome"/>
</dbReference>
<dbReference type="GO" id="GO:0008939">
    <property type="term" value="F:nicotinate-nucleotide-dimethylbenzimidazole phosphoribosyltransferase activity"/>
    <property type="evidence" value="ECO:0007669"/>
    <property type="project" value="InterPro"/>
</dbReference>
<dbReference type="CDD" id="cd02439">
    <property type="entry name" value="DMB-PRT_CobT"/>
    <property type="match status" value="1"/>
</dbReference>
<dbReference type="Gene3D" id="3.40.50.10210">
    <property type="match status" value="1"/>
</dbReference>
<dbReference type="HAMAP" id="MF_01086">
    <property type="entry name" value="UPF0284"/>
    <property type="match status" value="1"/>
</dbReference>
<dbReference type="InterPro" id="IPR003200">
    <property type="entry name" value="Nict_dMeBzImd_PRibTrfase"/>
</dbReference>
<dbReference type="InterPro" id="IPR002805">
    <property type="entry name" value="Nict_dMeBzImd_PRibTrfase_arc"/>
</dbReference>
<dbReference type="InterPro" id="IPR036087">
    <property type="entry name" value="Nict_dMeBzImd_PRibTrfase_sf"/>
</dbReference>
<dbReference type="NCBIfam" id="TIGR00303">
    <property type="entry name" value="nicotinate mononucleotide-dependent phosphoribosyltransferase CobT"/>
    <property type="match status" value="1"/>
</dbReference>
<dbReference type="NCBIfam" id="NF003369">
    <property type="entry name" value="PRK04447.1-2"/>
    <property type="match status" value="1"/>
</dbReference>
<dbReference type="PANTHER" id="PTHR38811">
    <property type="match status" value="1"/>
</dbReference>
<dbReference type="PANTHER" id="PTHR38811:SF1">
    <property type="entry name" value="UPF0284 PROTEIN SLL1500"/>
    <property type="match status" value="1"/>
</dbReference>
<dbReference type="Pfam" id="PF02277">
    <property type="entry name" value="DBI_PRT"/>
    <property type="match status" value="1"/>
</dbReference>
<dbReference type="SUPFAM" id="SSF52733">
    <property type="entry name" value="Nicotinate mononucleotide:5,6-dimethylbenzimidazole phosphoribosyltransferase (CobT)"/>
    <property type="match status" value="1"/>
</dbReference>
<protein>
    <recommendedName>
        <fullName evidence="1">UPF0284 protein P9301_04631</fullName>
    </recommendedName>
</protein>
<name>Y463_PROM0</name>
<keyword id="KW-1185">Reference proteome</keyword>
<gene>
    <name type="ordered locus">P9301_04631</name>
</gene>
<organism>
    <name type="scientific">Prochlorococcus marinus (strain MIT 9301)</name>
    <dbReference type="NCBI Taxonomy" id="167546"/>
    <lineage>
        <taxon>Bacteria</taxon>
        <taxon>Bacillati</taxon>
        <taxon>Cyanobacteriota</taxon>
        <taxon>Cyanophyceae</taxon>
        <taxon>Synechococcales</taxon>
        <taxon>Prochlorococcaceae</taxon>
        <taxon>Prochlorococcus</taxon>
    </lineage>
</organism>
<reference key="1">
    <citation type="journal article" date="2007" name="PLoS Genet.">
        <title>Patterns and implications of gene gain and loss in the evolution of Prochlorococcus.</title>
        <authorList>
            <person name="Kettler G.C."/>
            <person name="Martiny A.C."/>
            <person name="Huang K."/>
            <person name="Zucker J."/>
            <person name="Coleman M.L."/>
            <person name="Rodrigue S."/>
            <person name="Chen F."/>
            <person name="Lapidus A."/>
            <person name="Ferriera S."/>
            <person name="Johnson J."/>
            <person name="Steglich C."/>
            <person name="Church G.M."/>
            <person name="Richardson P."/>
            <person name="Chisholm S.W."/>
        </authorList>
    </citation>
    <scope>NUCLEOTIDE SEQUENCE [LARGE SCALE GENOMIC DNA]</scope>
    <source>
        <strain>MIT 9301</strain>
    </source>
</reference>
<proteinExistence type="inferred from homology"/>
<sequence length="385" mass="41792">MYSTELGINFFGNESNKKRQLNKIEILKKNIKNLKIFLIIAGTNTSQIPGISAAGINPKSRRTTALADAEFLLEGASKGHKYKLPLLNAGVTPALISHVCSKLINAYPVIVPLGIGVKPYFNHLVVEDRNLGPSNCLTTGKSMTKERVLNLYEKGLAIGKSLKQPVLISESVPGGTTTAQAVMEAFGLQVSNLVGSSLFKAPRELRRQVIKRGLLNAHFKADSDSFDVVAAVGDPFQAFSMGLLIGARLAKQPVILSGGSQMLAVILLVLEFLGEKNKDEFIEDVFIATTGWLVKDNSLNDLVNLINEKYDVKLLGLASPLNFKSSKYKELKDYELGHVKEGVGAGGISLLAFLDGFKNEEIVSLCQQNLEMMKGLGQISLEKDC</sequence>
<comment type="similarity">
    <text evidence="1">Belongs to the UPF0284 family.</text>
</comment>
<evidence type="ECO:0000255" key="1">
    <source>
        <dbReference type="HAMAP-Rule" id="MF_01086"/>
    </source>
</evidence>
<feature type="chain" id="PRO_1000064863" description="UPF0284 protein P9301_04631">
    <location>
        <begin position="1"/>
        <end position="385"/>
    </location>
</feature>
<accession>A3PBG1</accession>